<dbReference type="EC" id="2.7.7.6" evidence="2"/>
<dbReference type="EMBL" id="AE004437">
    <property type="protein sequence ID" value="AAG20694.1"/>
    <property type="molecule type" value="Genomic_DNA"/>
</dbReference>
<dbReference type="PIR" id="B84416">
    <property type="entry name" value="B84416"/>
</dbReference>
<dbReference type="RefSeq" id="WP_010903998.1">
    <property type="nucleotide sequence ID" value="NC_002607.1"/>
</dbReference>
<dbReference type="SMR" id="P0CX04"/>
<dbReference type="FunCoup" id="P0CX04">
    <property type="interactions" value="1"/>
</dbReference>
<dbReference type="STRING" id="64091.VNG_2666G"/>
<dbReference type="PaxDb" id="64091-VNG_2666G"/>
<dbReference type="KEGG" id="hal:VNG_2666G"/>
<dbReference type="PATRIC" id="fig|64091.14.peg.2071"/>
<dbReference type="HOGENOM" id="CLU_000524_5_3_2"/>
<dbReference type="InParanoid" id="P0CX04"/>
<dbReference type="OrthoDB" id="371768at2157"/>
<dbReference type="PhylomeDB" id="P0CX04"/>
<dbReference type="Proteomes" id="UP000000554">
    <property type="component" value="Chromosome"/>
</dbReference>
<dbReference type="GO" id="GO:0005737">
    <property type="term" value="C:cytoplasm"/>
    <property type="evidence" value="ECO:0007669"/>
    <property type="project" value="UniProtKB-SubCell"/>
</dbReference>
<dbReference type="GO" id="GO:0000428">
    <property type="term" value="C:DNA-directed RNA polymerase complex"/>
    <property type="evidence" value="ECO:0007669"/>
    <property type="project" value="UniProtKB-KW"/>
</dbReference>
<dbReference type="GO" id="GO:0003677">
    <property type="term" value="F:DNA binding"/>
    <property type="evidence" value="ECO:0007669"/>
    <property type="project" value="UniProtKB-KW"/>
</dbReference>
<dbReference type="GO" id="GO:0003899">
    <property type="term" value="F:DNA-directed RNA polymerase activity"/>
    <property type="evidence" value="ECO:0007669"/>
    <property type="project" value="UniProtKB-EC"/>
</dbReference>
<dbReference type="GO" id="GO:0032549">
    <property type="term" value="F:ribonucleoside binding"/>
    <property type="evidence" value="ECO:0007669"/>
    <property type="project" value="InterPro"/>
</dbReference>
<dbReference type="GO" id="GO:0006351">
    <property type="term" value="P:DNA-templated transcription"/>
    <property type="evidence" value="ECO:0007669"/>
    <property type="project" value="InterPro"/>
</dbReference>
<dbReference type="Gene3D" id="3.90.1100.10">
    <property type="match status" value="2"/>
</dbReference>
<dbReference type="Gene3D" id="3.90.1110.10">
    <property type="entry name" value="RNA polymerase Rpb2, domain 2"/>
    <property type="match status" value="1"/>
</dbReference>
<dbReference type="InterPro" id="IPR015712">
    <property type="entry name" value="DNA-dir_RNA_pol_su2"/>
</dbReference>
<dbReference type="InterPro" id="IPR007644">
    <property type="entry name" value="RNA_pol_bsu_protrusion"/>
</dbReference>
<dbReference type="InterPro" id="IPR007642">
    <property type="entry name" value="RNA_pol_Rpb2_2"/>
</dbReference>
<dbReference type="InterPro" id="IPR037034">
    <property type="entry name" value="RNA_pol_Rpb2_2_sf"/>
</dbReference>
<dbReference type="InterPro" id="IPR007645">
    <property type="entry name" value="RNA_pol_Rpb2_3"/>
</dbReference>
<dbReference type="NCBIfam" id="NF007175">
    <property type="entry name" value="PRK09606.1"/>
    <property type="match status" value="1"/>
</dbReference>
<dbReference type="PANTHER" id="PTHR20856">
    <property type="entry name" value="DNA-DIRECTED RNA POLYMERASE I SUBUNIT 2"/>
    <property type="match status" value="1"/>
</dbReference>
<dbReference type="Pfam" id="PF04563">
    <property type="entry name" value="RNA_pol_Rpb2_1"/>
    <property type="match status" value="1"/>
</dbReference>
<dbReference type="Pfam" id="PF04561">
    <property type="entry name" value="RNA_pol_Rpb2_2"/>
    <property type="match status" value="1"/>
</dbReference>
<dbReference type="Pfam" id="PF04565">
    <property type="entry name" value="RNA_pol_Rpb2_3"/>
    <property type="match status" value="1"/>
</dbReference>
<dbReference type="SUPFAM" id="SSF64484">
    <property type="entry name" value="beta and beta-prime subunits of DNA dependent RNA-polymerase"/>
    <property type="match status" value="1"/>
</dbReference>
<organism>
    <name type="scientific">Halobacterium salinarum (strain ATCC 700922 / JCM 11081 / NRC-1)</name>
    <name type="common">Halobacterium halobium</name>
    <dbReference type="NCBI Taxonomy" id="64091"/>
    <lineage>
        <taxon>Archaea</taxon>
        <taxon>Methanobacteriati</taxon>
        <taxon>Methanobacteriota</taxon>
        <taxon>Stenosarchaea group</taxon>
        <taxon>Halobacteria</taxon>
        <taxon>Halobacteriales</taxon>
        <taxon>Halobacteriaceae</taxon>
        <taxon>Halobacterium</taxon>
        <taxon>Halobacterium salinarum NRC-34001</taxon>
    </lineage>
</organism>
<evidence type="ECO:0000250" key="1">
    <source>
        <dbReference type="UniProtKB" id="B8YB55"/>
    </source>
</evidence>
<evidence type="ECO:0000250" key="2">
    <source>
        <dbReference type="UniProtKB" id="P11513"/>
    </source>
</evidence>
<evidence type="ECO:0000256" key="3">
    <source>
        <dbReference type="SAM" id="MobiDB-lite"/>
    </source>
</evidence>
<evidence type="ECO:0000303" key="4">
    <source>
    </source>
</evidence>
<evidence type="ECO:0000305" key="5"/>
<accession>P0CX04</accession>
<accession>P15352</accession>
<accession>Q9HM77</accession>
<name>RPO2N_HALSA</name>
<sequence>MLQEDKRELSESYFSKERLAEHHFRSYNAFLEHGMQDVVTEKERIETDIGDKEDEEPVWVELGDVRAVTPRVREADGSEELLYPQEARLRNITYSAPVFMEMSIVRGGEEEEERVLDTTETKVGRMPIMVGSDKCNISGFSDEELIEIGEDPADPGGYFIINGSERVLMTSEDLAPNKILAEYDSKYGDEIQVAKTFSQRRGYRALVLVERNREGLLEVSFPSVSGSISFVTLVRALGLESDEEIVHRVSEDPEIVKFMLENLEEADVQTQEEAIEDLGQRVASGQGKNYQLKRANYVIDRYLLPHLHEDGVEEEETRINKAYYLCRMAEACFELALGRREADDKDHYANKRLKVSGDLMKDLFRTALNKLARDVKYQLERANMRNRELTVNTVVRSDVLTERLEHPIATGNWVGGRSGVSQLVDRTDFMGVLSHLRRLRSPLSRSQPHFEARDLHATQWGRICPSETPEGPNCGLVKNFAQAMELSQDVDDERDLKQELSSMGVEGIPGISMETTSTTSADD</sequence>
<keyword id="KW-0963">Cytoplasm</keyword>
<keyword id="KW-0238">DNA-binding</keyword>
<keyword id="KW-0240">DNA-directed RNA polymerase</keyword>
<keyword id="KW-0548">Nucleotidyltransferase</keyword>
<keyword id="KW-1185">Reference proteome</keyword>
<keyword id="KW-0804">Transcription</keyword>
<keyword id="KW-0808">Transferase</keyword>
<feature type="chain" id="PRO_0000074031" description="DNA-directed RNA polymerase subunit Rpo2N">
    <location>
        <begin position="1"/>
        <end position="523"/>
    </location>
</feature>
<feature type="region of interest" description="Disordered" evidence="3">
    <location>
        <begin position="501"/>
        <end position="523"/>
    </location>
</feature>
<feature type="compositionally biased region" description="Polar residues" evidence="3">
    <location>
        <begin position="513"/>
        <end position="523"/>
    </location>
</feature>
<protein>
    <recommendedName>
        <fullName evidence="5">DNA-directed RNA polymerase subunit Rpo2N</fullName>
        <ecNumber evidence="2">2.7.7.6</ecNumber>
    </recommendedName>
    <alternativeName>
        <fullName evidence="4">DNA-directed RNA polymerase subunit B''</fullName>
    </alternativeName>
</protein>
<proteinExistence type="inferred from homology"/>
<gene>
    <name evidence="5" type="primary">rpo2N</name>
    <name evidence="4" type="synonym">rpoB''</name>
    <name type="synonym">rpoB2</name>
    <name type="ordered locus">VNG_2666G</name>
</gene>
<reference key="1">
    <citation type="journal article" date="2000" name="Proc. Natl. Acad. Sci. U.S.A.">
        <title>Genome sequence of Halobacterium species NRC-1.</title>
        <authorList>
            <person name="Ng W.V."/>
            <person name="Kennedy S.P."/>
            <person name="Mahairas G.G."/>
            <person name="Berquist B."/>
            <person name="Pan M."/>
            <person name="Shukla H.D."/>
            <person name="Lasky S.R."/>
            <person name="Baliga N.S."/>
            <person name="Thorsson V."/>
            <person name="Sbrogna J."/>
            <person name="Swartzell S."/>
            <person name="Weir D."/>
            <person name="Hall J."/>
            <person name="Dahl T.A."/>
            <person name="Welti R."/>
            <person name="Goo Y.A."/>
            <person name="Leithauser B."/>
            <person name="Keller K."/>
            <person name="Cruz R."/>
            <person name="Danson M.J."/>
            <person name="Hough D.W."/>
            <person name="Maddocks D.G."/>
            <person name="Jablonski P.E."/>
            <person name="Krebs M.P."/>
            <person name="Angevine C.M."/>
            <person name="Dale H."/>
            <person name="Isenbarger T.A."/>
            <person name="Peck R.F."/>
            <person name="Pohlschroder M."/>
            <person name="Spudich J.L."/>
            <person name="Jung K.-H."/>
            <person name="Alam M."/>
            <person name="Freitas T."/>
            <person name="Hou S."/>
            <person name="Daniels C.J."/>
            <person name="Dennis P.P."/>
            <person name="Omer A.D."/>
            <person name="Ebhardt H."/>
            <person name="Lowe T.M."/>
            <person name="Liang P."/>
            <person name="Riley M."/>
            <person name="Hood L."/>
            <person name="DasSarma S."/>
        </authorList>
    </citation>
    <scope>NUCLEOTIDE SEQUENCE [LARGE SCALE GENOMIC DNA]</scope>
    <source>
        <strain>ATCC 700922 / JCM 11081 / NRC-1</strain>
    </source>
</reference>
<comment type="function">
    <text evidence="1">DNA-dependent RNA polymerase (RNAP) catalyzes the transcription of DNA into RNA using the four ribonucleoside triphosphates as substrates. The Rpo2 subunit (Rpo2N and Rpo2C in this organism) is implicated in DNA promoter recognition and in nucleotide binding.</text>
</comment>
<comment type="catalytic activity">
    <reaction evidence="2">
        <text>RNA(n) + a ribonucleoside 5'-triphosphate = RNA(n+1) + diphosphate</text>
        <dbReference type="Rhea" id="RHEA:21248"/>
        <dbReference type="Rhea" id="RHEA-COMP:14527"/>
        <dbReference type="Rhea" id="RHEA-COMP:17342"/>
        <dbReference type="ChEBI" id="CHEBI:33019"/>
        <dbReference type="ChEBI" id="CHEBI:61557"/>
        <dbReference type="ChEBI" id="CHEBI:140395"/>
        <dbReference type="EC" id="2.7.7.6"/>
    </reaction>
</comment>
<comment type="subunit">
    <text evidence="1">Part of the RNA polymerase complex.</text>
</comment>
<comment type="subcellular location">
    <subcellularLocation>
        <location evidence="1">Cytoplasm</location>
    </subcellularLocation>
</comment>
<comment type="similarity">
    <text evidence="5">Belongs to the RNA polymerase beta chain family.</text>
</comment>